<sequence>MIKELQGGNMATKFKTDEEMRGDRLTQCLDDIMRASTEMMVQQQLKTIQLNSDVAAGFRKALSKSLGDRVRAFHSILDGVETTLTTASQYLDAVEEAAVKMKQWKQQQEEEQRRKHQAELEKNKRQQEHDAATKAAAAQQLMAQQSPVDLTAPTPTGLASNLDKSNRVGGVKPFSAEFGHLDEMDLSMFGGIDGHGDFSLEDFNMGGNSVPLNGGRPRNMVMADAGGFPARGGMGRGGATAINNGAQEIKTSTNEASTNNRNNDGTGGASNPRISSNYNSAVADHESIGLRVDANGQNTKQSGQQSGAGLNPDDYLTLNDFNDLGIDWNTGENNELDLNDFNI</sequence>
<name>MED2_EREGS</name>
<keyword id="KW-0010">Activator</keyword>
<keyword id="KW-0539">Nucleus</keyword>
<keyword id="KW-1185">Reference proteome</keyword>
<keyword id="KW-0804">Transcription</keyword>
<keyword id="KW-0805">Transcription regulation</keyword>
<protein>
    <recommendedName>
        <fullName>Mediator of RNA polymerase II transcription subunit 2</fullName>
    </recommendedName>
    <alternativeName>
        <fullName>Mediator complex subunit 2</fullName>
    </alternativeName>
</protein>
<gene>
    <name type="primary">MED2</name>
    <name type="ordered locus">AEL009C</name>
</gene>
<evidence type="ECO:0000250" key="1"/>
<evidence type="ECO:0000256" key="2">
    <source>
        <dbReference type="SAM" id="MobiDB-lite"/>
    </source>
</evidence>
<evidence type="ECO:0000305" key="3"/>
<feature type="chain" id="PRO_0000302013" description="Mediator of RNA polymerase II transcription subunit 2">
    <location>
        <begin position="1"/>
        <end position="343"/>
    </location>
</feature>
<feature type="region of interest" description="Disordered" evidence="2">
    <location>
        <begin position="105"/>
        <end position="141"/>
    </location>
</feature>
<feature type="region of interest" description="Disordered" evidence="2">
    <location>
        <begin position="252"/>
        <end position="277"/>
    </location>
</feature>
<feature type="compositionally biased region" description="Basic and acidic residues" evidence="2">
    <location>
        <begin position="107"/>
        <end position="132"/>
    </location>
</feature>
<feature type="compositionally biased region" description="Polar residues" evidence="2">
    <location>
        <begin position="252"/>
        <end position="264"/>
    </location>
</feature>
<reference key="1">
    <citation type="journal article" date="2004" name="Science">
        <title>The Ashbya gossypii genome as a tool for mapping the ancient Saccharomyces cerevisiae genome.</title>
        <authorList>
            <person name="Dietrich F.S."/>
            <person name="Voegeli S."/>
            <person name="Brachat S."/>
            <person name="Lerch A."/>
            <person name="Gates K."/>
            <person name="Steiner S."/>
            <person name="Mohr C."/>
            <person name="Poehlmann R."/>
            <person name="Luedi P."/>
            <person name="Choi S."/>
            <person name="Wing R.A."/>
            <person name="Flavier A."/>
            <person name="Gaffney T.D."/>
            <person name="Philippsen P."/>
        </authorList>
    </citation>
    <scope>NUCLEOTIDE SEQUENCE [LARGE SCALE GENOMIC DNA]</scope>
    <source>
        <strain>ATCC 10895 / CBS 109.51 / FGSC 9923 / NRRL Y-1056</strain>
    </source>
</reference>
<reference key="2">
    <citation type="journal article" date="2013" name="G3 (Bethesda)">
        <title>Genomes of Ashbya fungi isolated from insects reveal four mating-type loci, numerous translocations, lack of transposons, and distinct gene duplications.</title>
        <authorList>
            <person name="Dietrich F.S."/>
            <person name="Voegeli S."/>
            <person name="Kuo S."/>
            <person name="Philippsen P."/>
        </authorList>
    </citation>
    <scope>GENOME REANNOTATION</scope>
    <source>
        <strain>ATCC 10895 / CBS 109.51 / FGSC 9923 / NRRL Y-1056</strain>
    </source>
</reference>
<comment type="function">
    <text evidence="1">Component of the Mediator complex, a coactivator involved in the regulated transcription of nearly all RNA polymerase II-dependent genes. Mediator functions as a bridge to convey information from gene-specific regulatory proteins to the basal RNA polymerase II transcription machinery. Mediator is recruited to promoters by direct interactions with regulatory proteins and serves as a scaffold for the assembly of a functional preinitiation complex with RNA polymerase II and the general transcription factors (By similarity).</text>
</comment>
<comment type="subunit">
    <text evidence="1">Component of the Mediator complex.</text>
</comment>
<comment type="subcellular location">
    <subcellularLocation>
        <location evidence="1">Nucleus</location>
    </subcellularLocation>
</comment>
<comment type="similarity">
    <text evidence="3">Belongs to the Mediator complex subunit 2 family.</text>
</comment>
<organism>
    <name type="scientific">Eremothecium gossypii (strain ATCC 10895 / CBS 109.51 / FGSC 9923 / NRRL Y-1056)</name>
    <name type="common">Yeast</name>
    <name type="synonym">Ashbya gossypii</name>
    <dbReference type="NCBI Taxonomy" id="284811"/>
    <lineage>
        <taxon>Eukaryota</taxon>
        <taxon>Fungi</taxon>
        <taxon>Dikarya</taxon>
        <taxon>Ascomycota</taxon>
        <taxon>Saccharomycotina</taxon>
        <taxon>Saccharomycetes</taxon>
        <taxon>Saccharomycetales</taxon>
        <taxon>Saccharomycetaceae</taxon>
        <taxon>Eremothecium</taxon>
    </lineage>
</organism>
<dbReference type="EMBL" id="AE016818">
    <property type="protein sequence ID" value="AAS52676.1"/>
    <property type="molecule type" value="Genomic_DNA"/>
</dbReference>
<dbReference type="RefSeq" id="NP_984852.1">
    <property type="nucleotide sequence ID" value="NM_210206.1"/>
</dbReference>
<dbReference type="SMR" id="Q757M0"/>
<dbReference type="FunCoup" id="Q757M0">
    <property type="interactions" value="138"/>
</dbReference>
<dbReference type="STRING" id="284811.Q757M0"/>
<dbReference type="EnsemblFungi" id="AAS52676">
    <property type="protein sequence ID" value="AAS52676"/>
    <property type="gene ID" value="AGOS_AEL009C"/>
</dbReference>
<dbReference type="GeneID" id="4621051"/>
<dbReference type="KEGG" id="ago:AGOS_AEL009C"/>
<dbReference type="eggNOG" id="ENOG502RZB6">
    <property type="taxonomic scope" value="Eukaryota"/>
</dbReference>
<dbReference type="HOGENOM" id="CLU_046031_0_0_1"/>
<dbReference type="InParanoid" id="Q757M0"/>
<dbReference type="OMA" id="AEMMMQQ"/>
<dbReference type="OrthoDB" id="4069381at2759"/>
<dbReference type="Proteomes" id="UP000000591">
    <property type="component" value="Chromosome V"/>
</dbReference>
<dbReference type="GO" id="GO:0005634">
    <property type="term" value="C:nucleus"/>
    <property type="evidence" value="ECO:0007669"/>
    <property type="project" value="UniProtKB-SubCell"/>
</dbReference>
<dbReference type="InterPro" id="IPR021017">
    <property type="entry name" value="Mediator_Med2_fun"/>
</dbReference>
<dbReference type="Pfam" id="PF11214">
    <property type="entry name" value="Med2"/>
    <property type="match status" value="1"/>
</dbReference>
<proteinExistence type="inferred from homology"/>
<accession>Q757M0</accession>